<protein>
    <recommendedName>
        <fullName evidence="2">Large ribosomal subunit protein bL27</fullName>
    </recommendedName>
    <alternativeName>
        <fullName evidence="4">50S ribosomal protein L27</fullName>
    </alternativeName>
</protein>
<organism>
    <name type="scientific">Streptococcus thermophilus (strain ATCC BAA-491 / LMD-9)</name>
    <dbReference type="NCBI Taxonomy" id="322159"/>
    <lineage>
        <taxon>Bacteria</taxon>
        <taxon>Bacillati</taxon>
        <taxon>Bacillota</taxon>
        <taxon>Bacilli</taxon>
        <taxon>Lactobacillales</taxon>
        <taxon>Streptococcaceae</taxon>
        <taxon>Streptococcus</taxon>
    </lineage>
</organism>
<gene>
    <name evidence="2" type="primary">rpmA</name>
    <name type="ordered locus">STER_0456</name>
</gene>
<feature type="propeptide" id="PRO_0000459969" evidence="1">
    <location>
        <begin position="1"/>
        <end position="11"/>
    </location>
</feature>
<feature type="chain" id="PRO_1000017626" description="Large ribosomal subunit protein bL27">
    <location>
        <begin position="12"/>
        <end position="96"/>
    </location>
</feature>
<feature type="region of interest" description="Disordered" evidence="3">
    <location>
        <begin position="13"/>
        <end position="36"/>
    </location>
</feature>
<dbReference type="EMBL" id="CP000419">
    <property type="protein sequence ID" value="ABJ65740.1"/>
    <property type="molecule type" value="Genomic_DNA"/>
</dbReference>
<dbReference type="RefSeq" id="WP_002885483.1">
    <property type="nucleotide sequence ID" value="NZ_CP086001.1"/>
</dbReference>
<dbReference type="SMR" id="Q03M32"/>
<dbReference type="GeneID" id="93791587"/>
<dbReference type="KEGG" id="ste:STER_0456"/>
<dbReference type="HOGENOM" id="CLU_095424_4_0_9"/>
<dbReference type="GO" id="GO:0022625">
    <property type="term" value="C:cytosolic large ribosomal subunit"/>
    <property type="evidence" value="ECO:0007669"/>
    <property type="project" value="TreeGrafter"/>
</dbReference>
<dbReference type="GO" id="GO:0003735">
    <property type="term" value="F:structural constituent of ribosome"/>
    <property type="evidence" value="ECO:0007669"/>
    <property type="project" value="InterPro"/>
</dbReference>
<dbReference type="GO" id="GO:0006412">
    <property type="term" value="P:translation"/>
    <property type="evidence" value="ECO:0007669"/>
    <property type="project" value="UniProtKB-UniRule"/>
</dbReference>
<dbReference type="FunFam" id="2.40.50.100:FF:000004">
    <property type="entry name" value="50S ribosomal protein L27"/>
    <property type="match status" value="1"/>
</dbReference>
<dbReference type="Gene3D" id="2.40.50.100">
    <property type="match status" value="1"/>
</dbReference>
<dbReference type="HAMAP" id="MF_00539">
    <property type="entry name" value="Ribosomal_bL27"/>
    <property type="match status" value="1"/>
</dbReference>
<dbReference type="InterPro" id="IPR001684">
    <property type="entry name" value="Ribosomal_bL27"/>
</dbReference>
<dbReference type="InterPro" id="IPR018261">
    <property type="entry name" value="Ribosomal_bL27_CS"/>
</dbReference>
<dbReference type="NCBIfam" id="TIGR00062">
    <property type="entry name" value="L27"/>
    <property type="match status" value="1"/>
</dbReference>
<dbReference type="PANTHER" id="PTHR15893:SF0">
    <property type="entry name" value="LARGE RIBOSOMAL SUBUNIT PROTEIN BL27M"/>
    <property type="match status" value="1"/>
</dbReference>
<dbReference type="PANTHER" id="PTHR15893">
    <property type="entry name" value="RIBOSOMAL PROTEIN L27"/>
    <property type="match status" value="1"/>
</dbReference>
<dbReference type="Pfam" id="PF01016">
    <property type="entry name" value="Ribosomal_L27"/>
    <property type="match status" value="1"/>
</dbReference>
<dbReference type="PRINTS" id="PR00063">
    <property type="entry name" value="RIBOSOMALL27"/>
</dbReference>
<dbReference type="SUPFAM" id="SSF110324">
    <property type="entry name" value="Ribosomal L27 protein-like"/>
    <property type="match status" value="1"/>
</dbReference>
<dbReference type="PROSITE" id="PS00831">
    <property type="entry name" value="RIBOSOMAL_L27"/>
    <property type="match status" value="1"/>
</dbReference>
<sequence length="96" mass="10318">MLKTLENLQLFAHKKGGGSTSNGRDSQAKRLGAKAADGQTVSGGSILYRQRGTHIYPGVNVGRGGDDTLFAKVEGVVRFERKGRDKKQVSVYPVAK</sequence>
<comment type="PTM">
    <text evidence="1">The N-terminus is cleaved by ribosomal processing cysteine protease Prp.</text>
</comment>
<comment type="similarity">
    <text evidence="2">Belongs to the bacterial ribosomal protein bL27 family.</text>
</comment>
<keyword id="KW-0687">Ribonucleoprotein</keyword>
<keyword id="KW-0689">Ribosomal protein</keyword>
<proteinExistence type="inferred from homology"/>
<evidence type="ECO:0000250" key="1">
    <source>
        <dbReference type="UniProtKB" id="Q2FXT0"/>
    </source>
</evidence>
<evidence type="ECO:0000255" key="2">
    <source>
        <dbReference type="HAMAP-Rule" id="MF_00539"/>
    </source>
</evidence>
<evidence type="ECO:0000256" key="3">
    <source>
        <dbReference type="SAM" id="MobiDB-lite"/>
    </source>
</evidence>
<evidence type="ECO:0000305" key="4"/>
<accession>Q03M32</accession>
<name>RL27_STRTD</name>
<reference key="1">
    <citation type="journal article" date="2006" name="Proc. Natl. Acad. Sci. U.S.A.">
        <title>Comparative genomics of the lactic acid bacteria.</title>
        <authorList>
            <person name="Makarova K.S."/>
            <person name="Slesarev A."/>
            <person name="Wolf Y.I."/>
            <person name="Sorokin A."/>
            <person name="Mirkin B."/>
            <person name="Koonin E.V."/>
            <person name="Pavlov A."/>
            <person name="Pavlova N."/>
            <person name="Karamychev V."/>
            <person name="Polouchine N."/>
            <person name="Shakhova V."/>
            <person name="Grigoriev I."/>
            <person name="Lou Y."/>
            <person name="Rohksar D."/>
            <person name="Lucas S."/>
            <person name="Huang K."/>
            <person name="Goodstein D.M."/>
            <person name="Hawkins T."/>
            <person name="Plengvidhya V."/>
            <person name="Welker D."/>
            <person name="Hughes J."/>
            <person name="Goh Y."/>
            <person name="Benson A."/>
            <person name="Baldwin K."/>
            <person name="Lee J.-H."/>
            <person name="Diaz-Muniz I."/>
            <person name="Dosti B."/>
            <person name="Smeianov V."/>
            <person name="Wechter W."/>
            <person name="Barabote R."/>
            <person name="Lorca G."/>
            <person name="Altermann E."/>
            <person name="Barrangou R."/>
            <person name="Ganesan B."/>
            <person name="Xie Y."/>
            <person name="Rawsthorne H."/>
            <person name="Tamir D."/>
            <person name="Parker C."/>
            <person name="Breidt F."/>
            <person name="Broadbent J.R."/>
            <person name="Hutkins R."/>
            <person name="O'Sullivan D."/>
            <person name="Steele J."/>
            <person name="Unlu G."/>
            <person name="Saier M.H. Jr."/>
            <person name="Klaenhammer T."/>
            <person name="Richardson P."/>
            <person name="Kozyavkin S."/>
            <person name="Weimer B.C."/>
            <person name="Mills D.A."/>
        </authorList>
    </citation>
    <scope>NUCLEOTIDE SEQUENCE [LARGE SCALE GENOMIC DNA]</scope>
    <source>
        <strain>ATCC BAA-491 / LMD-9</strain>
    </source>
</reference>